<name>PSMA3_STAAE</name>
<keyword id="KW-0204">Cytolysis</keyword>
<keyword id="KW-0843">Virulence</keyword>
<organism>
    <name type="scientific">Staphylococcus aureus (strain Newman)</name>
    <dbReference type="NCBI Taxonomy" id="426430"/>
    <lineage>
        <taxon>Bacteria</taxon>
        <taxon>Bacillati</taxon>
        <taxon>Bacillota</taxon>
        <taxon>Bacilli</taxon>
        <taxon>Bacillales</taxon>
        <taxon>Staphylococcaceae</taxon>
        <taxon>Staphylococcus</taxon>
    </lineage>
</organism>
<sequence length="22" mass="2607">MEFVAKLFKFFKDLLGKFLGNN</sequence>
<comment type="function">
    <text evidence="1">Peptide which can recruit, activate and subsequently lyse human neutrophils, thus eliminating the main cellular defense against infection.</text>
</comment>
<comment type="similarity">
    <text evidence="2">Belongs to the phenol-soluble modulin alpha peptides family.</text>
</comment>
<evidence type="ECO:0000250" key="1">
    <source>
        <dbReference type="UniProtKB" id="A9JX07"/>
    </source>
</evidence>
<evidence type="ECO:0000305" key="2"/>
<proteinExistence type="inferred from homology"/>
<dbReference type="EMBL" id="AP009351">
    <property type="protein sequence ID" value="BAH22633.1"/>
    <property type="molecule type" value="Genomic_DNA"/>
</dbReference>
<dbReference type="RefSeq" id="WP_014373779.1">
    <property type="nucleotide sequence ID" value="NZ_JBBIAE010000014.1"/>
</dbReference>
<dbReference type="SMR" id="P0C809"/>
<dbReference type="KEGG" id="sae:NWMN_2617"/>
<dbReference type="HOGENOM" id="CLU_3424958_0_0_9"/>
<dbReference type="Proteomes" id="UP000006386">
    <property type="component" value="Chromosome"/>
</dbReference>
<dbReference type="GO" id="GO:0031640">
    <property type="term" value="P:killing of cells of another organism"/>
    <property type="evidence" value="ECO:0007669"/>
    <property type="project" value="UniProtKB-KW"/>
</dbReference>
<dbReference type="InterPro" id="IPR031429">
    <property type="entry name" value="PSM_alpha"/>
</dbReference>
<dbReference type="InterPro" id="IPR053383">
    <property type="entry name" value="PSM_alpha_peptides"/>
</dbReference>
<dbReference type="NCBIfam" id="NF033426">
    <property type="entry name" value="PSM_alpha_3"/>
    <property type="match status" value="1"/>
</dbReference>
<dbReference type="Pfam" id="PF17063">
    <property type="entry name" value="PSMalpha"/>
    <property type="match status" value="1"/>
</dbReference>
<reference key="1">
    <citation type="journal article" date="2008" name="J. Bacteriol.">
        <title>Genome sequence of Staphylococcus aureus strain Newman and comparative analysis of staphylococcal genomes: polymorphism and evolution of two major pathogenicity islands.</title>
        <authorList>
            <person name="Baba T."/>
            <person name="Bae T."/>
            <person name="Schneewind O."/>
            <person name="Takeuchi F."/>
            <person name="Hiramatsu K."/>
        </authorList>
    </citation>
    <scope>NUCLEOTIDE SEQUENCE [LARGE SCALE GENOMIC DNA]</scope>
    <source>
        <strain>Newman</strain>
    </source>
</reference>
<accession>P0C809</accession>
<accession>B9ZUX5</accession>
<gene>
    <name type="primary">psmA3</name>
    <name type="ordered locus">NWMN_0417.2</name>
    <name type="ORF">NWMN_2617</name>
</gene>
<feature type="peptide" id="PRO_0000345064" description="Phenol-soluble modulin alpha 3 peptide">
    <location>
        <begin position="1"/>
        <end position="22"/>
    </location>
</feature>
<protein>
    <recommendedName>
        <fullName>Phenol-soluble modulin alpha 3 peptide</fullName>
    </recommendedName>
</protein>